<feature type="chain" id="PRO_0000249815" description="Kinetochore protein Nuf2">
    <location>
        <begin position="1"/>
        <end position="464"/>
    </location>
</feature>
<feature type="region of interest" description="Interaction with the N-terminus of NDC80" evidence="1">
    <location>
        <begin position="1"/>
        <end position="385"/>
    </location>
</feature>
<feature type="region of interest" description="Interaction with the C-terminus of NDC80 and the SPBC24-SPBC25 subcomplex" evidence="1">
    <location>
        <begin position="386"/>
        <end position="464"/>
    </location>
</feature>
<feature type="coiled-coil region" evidence="3">
    <location>
        <begin position="148"/>
        <end position="201"/>
    </location>
</feature>
<feature type="coiled-coil region" evidence="3">
    <location>
        <begin position="249"/>
        <end position="372"/>
    </location>
</feature>
<feature type="coiled-coil region" evidence="3">
    <location>
        <begin position="413"/>
        <end position="443"/>
    </location>
</feature>
<feature type="modified residue" description="N-acetylmethionine" evidence="2">
    <location>
        <position position="1"/>
    </location>
</feature>
<feature type="modified residue" description="Phosphoserine" evidence="2">
    <location>
        <position position="171"/>
    </location>
</feature>
<feature type="modified residue" description="Phosphoserine" evidence="2">
    <location>
        <position position="247"/>
    </location>
</feature>
<proteinExistence type="evidence at transcript level"/>
<reference key="1">
    <citation type="journal article" date="2004" name="Genome Res.">
        <title>The status, quality, and expansion of the NIH full-length cDNA project: the Mammalian Gene Collection (MGC).</title>
        <authorList>
            <consortium name="The MGC Project Team"/>
        </authorList>
    </citation>
    <scope>NUCLEOTIDE SEQUENCE [LARGE SCALE MRNA]</scope>
    <source>
        <tissue>Testis</tissue>
    </source>
</reference>
<accession>Q6AYL9</accession>
<name>NUF2_RAT</name>
<gene>
    <name type="primary">Nuf2</name>
    <name type="synonym">Cdca1</name>
</gene>
<keyword id="KW-0007">Acetylation</keyword>
<keyword id="KW-0131">Cell cycle</keyword>
<keyword id="KW-0132">Cell division</keyword>
<keyword id="KW-0137">Centromere</keyword>
<keyword id="KW-0158">Chromosome</keyword>
<keyword id="KW-0175">Coiled coil</keyword>
<keyword id="KW-0995">Kinetochore</keyword>
<keyword id="KW-0498">Mitosis</keyword>
<keyword id="KW-0539">Nucleus</keyword>
<keyword id="KW-0597">Phosphoprotein</keyword>
<keyword id="KW-1185">Reference proteome</keyword>
<organism>
    <name type="scientific">Rattus norvegicus</name>
    <name type="common">Rat</name>
    <dbReference type="NCBI Taxonomy" id="10116"/>
    <lineage>
        <taxon>Eukaryota</taxon>
        <taxon>Metazoa</taxon>
        <taxon>Chordata</taxon>
        <taxon>Craniata</taxon>
        <taxon>Vertebrata</taxon>
        <taxon>Euteleostomi</taxon>
        <taxon>Mammalia</taxon>
        <taxon>Eutheria</taxon>
        <taxon>Euarchontoglires</taxon>
        <taxon>Glires</taxon>
        <taxon>Rodentia</taxon>
        <taxon>Myomorpha</taxon>
        <taxon>Muroidea</taxon>
        <taxon>Muridae</taxon>
        <taxon>Murinae</taxon>
        <taxon>Rattus</taxon>
    </lineage>
</organism>
<sequence length="464" mass="54556">METLSFPRYNIAEIVVHIRNKLLTGADGKNLSKSDFLPNPKPEVLYMIYMRALQLVYGVRLEHFYMMPVNIEVMYPHIMEGFLPVSNLFFHLDSFMPICRVNDFEIADILYPKANRTSRFLSGIINFIHFRETCLEKYEEFLLQNKSSVDKIQQLSNAHQEALMKLEKLNSVPVEEQEEFKQLKDDIQELQHLLNQDFRQKTTLLQERYTKMKSDFSEKTKHVNELKLSVVSLKEVQDSLKSKIVDSPEKLKNYKEKMKDTVQKLRSAREEVMEKYDIYRDSVDCLPSCQLEVQLYQKKSQDLADNREKLSSILKESLNLEGQIDSDSSELKKLKTEENSLIRLMTLKKERLATMQFKINKKQEDVKQYKRTMIEDCNKVQEKRDAVCEQVTAINQDIHKIKSGIQQLRDAEKREKLKSQEILVDLKSALEKYHEGIEKTTEECCTRIGGKTAELKRRMFKMPP</sequence>
<dbReference type="EMBL" id="BC078993">
    <property type="protein sequence ID" value="AAH78993.1"/>
    <property type="molecule type" value="mRNA"/>
</dbReference>
<dbReference type="RefSeq" id="NP_001012028.1">
    <property type="nucleotide sequence ID" value="NM_001012028.1"/>
</dbReference>
<dbReference type="RefSeq" id="XP_063128436.1">
    <property type="nucleotide sequence ID" value="XM_063272366.1"/>
</dbReference>
<dbReference type="SMR" id="Q6AYL9"/>
<dbReference type="FunCoup" id="Q6AYL9">
    <property type="interactions" value="439"/>
</dbReference>
<dbReference type="STRING" id="10116.ENSRNOP00000003650"/>
<dbReference type="PhosphoSitePlus" id="Q6AYL9"/>
<dbReference type="PaxDb" id="10116-ENSRNOP00000003650"/>
<dbReference type="Ensembl" id="ENSRNOT00000003650.7">
    <property type="protein sequence ID" value="ENSRNOP00000003650.5"/>
    <property type="gene ID" value="ENSRNOG00000002711.7"/>
</dbReference>
<dbReference type="GeneID" id="304951"/>
<dbReference type="KEGG" id="rno:304951"/>
<dbReference type="UCSC" id="RGD:1307952">
    <property type="organism name" value="rat"/>
</dbReference>
<dbReference type="AGR" id="RGD:1307952"/>
<dbReference type="CTD" id="83540"/>
<dbReference type="RGD" id="1307952">
    <property type="gene designation" value="Nuf2"/>
</dbReference>
<dbReference type="eggNOG" id="KOG4438">
    <property type="taxonomic scope" value="Eukaryota"/>
</dbReference>
<dbReference type="GeneTree" id="ENSGT00390000004199"/>
<dbReference type="HOGENOM" id="CLU_589957_0_0_1"/>
<dbReference type="InParanoid" id="Q6AYL9"/>
<dbReference type="OMA" id="YLKMEAH"/>
<dbReference type="OrthoDB" id="8194677at2759"/>
<dbReference type="PhylomeDB" id="Q6AYL9"/>
<dbReference type="TreeFam" id="TF101067"/>
<dbReference type="Reactome" id="R-RNO-141444">
    <property type="pathway name" value="Amplification of signal from unattached kinetochores via a MAD2 inhibitory signal"/>
</dbReference>
<dbReference type="Reactome" id="R-RNO-2467813">
    <property type="pathway name" value="Separation of Sister Chromatids"/>
</dbReference>
<dbReference type="Reactome" id="R-RNO-2500257">
    <property type="pathway name" value="Resolution of Sister Chromatid Cohesion"/>
</dbReference>
<dbReference type="Reactome" id="R-RNO-5663220">
    <property type="pathway name" value="RHO GTPases Activate Formins"/>
</dbReference>
<dbReference type="Reactome" id="R-RNO-68877">
    <property type="pathway name" value="Mitotic Prometaphase"/>
</dbReference>
<dbReference type="Reactome" id="R-RNO-9648025">
    <property type="pathway name" value="EML4 and NUDC in mitotic spindle formation"/>
</dbReference>
<dbReference type="PRO" id="PR:Q6AYL9"/>
<dbReference type="Proteomes" id="UP000002494">
    <property type="component" value="Chromosome 13"/>
</dbReference>
<dbReference type="Bgee" id="ENSRNOG00000002711">
    <property type="expression patterns" value="Expressed in thymus and 19 other cell types or tissues"/>
</dbReference>
<dbReference type="GO" id="GO:0005829">
    <property type="term" value="C:cytosol"/>
    <property type="evidence" value="ECO:0007669"/>
    <property type="project" value="Ensembl"/>
</dbReference>
<dbReference type="GO" id="GO:0031262">
    <property type="term" value="C:Ndc80 complex"/>
    <property type="evidence" value="ECO:0000250"/>
    <property type="project" value="UniProtKB"/>
</dbReference>
<dbReference type="GO" id="GO:0005654">
    <property type="term" value="C:nucleoplasm"/>
    <property type="evidence" value="ECO:0007669"/>
    <property type="project" value="Ensembl"/>
</dbReference>
<dbReference type="GO" id="GO:0000940">
    <property type="term" value="C:outer kinetochore"/>
    <property type="evidence" value="ECO:0000266"/>
    <property type="project" value="RGD"/>
</dbReference>
<dbReference type="GO" id="GO:0008017">
    <property type="term" value="F:microtubule binding"/>
    <property type="evidence" value="ECO:0000250"/>
    <property type="project" value="UniProtKB"/>
</dbReference>
<dbReference type="GO" id="GO:0044877">
    <property type="term" value="F:protein-containing complex binding"/>
    <property type="evidence" value="ECO:0000318"/>
    <property type="project" value="GO_Central"/>
</dbReference>
<dbReference type="GO" id="GO:0051315">
    <property type="term" value="P:attachment of mitotic spindle microtubules to kinetochore"/>
    <property type="evidence" value="ECO:0000318"/>
    <property type="project" value="GO_Central"/>
</dbReference>
<dbReference type="GO" id="GO:0008608">
    <property type="term" value="P:attachment of spindle microtubules to kinetochore"/>
    <property type="evidence" value="ECO:0000266"/>
    <property type="project" value="RGD"/>
</dbReference>
<dbReference type="GO" id="GO:0051301">
    <property type="term" value="P:cell division"/>
    <property type="evidence" value="ECO:0007669"/>
    <property type="project" value="UniProtKB-KW"/>
</dbReference>
<dbReference type="GO" id="GO:0051383">
    <property type="term" value="P:kinetochore organization"/>
    <property type="evidence" value="ECO:0000318"/>
    <property type="project" value="GO_Central"/>
</dbReference>
<dbReference type="GO" id="GO:0045132">
    <property type="term" value="P:meiotic chromosome segregation"/>
    <property type="evidence" value="ECO:0000318"/>
    <property type="project" value="GO_Central"/>
</dbReference>
<dbReference type="GO" id="GO:0007052">
    <property type="term" value="P:mitotic spindle organization"/>
    <property type="evidence" value="ECO:0000318"/>
    <property type="project" value="GO_Central"/>
</dbReference>
<dbReference type="FunFam" id="1.10.418.60:FF:000001">
    <property type="entry name" value="NDC80 kinetochore complex component NUF2"/>
    <property type="match status" value="1"/>
</dbReference>
<dbReference type="Gene3D" id="1.10.418.60">
    <property type="entry name" value="Ncd80 complex, Nuf2 subunit"/>
    <property type="match status" value="1"/>
</dbReference>
<dbReference type="InterPro" id="IPR005549">
    <property type="entry name" value="Kinetochore_Nuf2_N"/>
</dbReference>
<dbReference type="InterPro" id="IPR038275">
    <property type="entry name" value="Nuf2_N_sf"/>
</dbReference>
<dbReference type="PANTHER" id="PTHR21650:SF2">
    <property type="entry name" value="KINETOCHORE PROTEIN NUF2"/>
    <property type="match status" value="1"/>
</dbReference>
<dbReference type="PANTHER" id="PTHR21650">
    <property type="entry name" value="MEMBRALIN/KINETOCHORE PROTEIN NUF2"/>
    <property type="match status" value="1"/>
</dbReference>
<dbReference type="Pfam" id="PF03800">
    <property type="entry name" value="Nuf2"/>
    <property type="match status" value="1"/>
</dbReference>
<comment type="function">
    <text evidence="2">Acts as a component of the essential kinetochore-associated NDC80 complex, which is required for chromosome segregation and spindle checkpoint activity. Required for kinetochore integrity and the organization of stable microtubule binding sites in the outer plate of the kinetochore. The NDC80 complex synergistically enhances the affinity of the SKA1 complex for microtubules and may allow the NDC80 complex to track depolymerizing microtubules.</text>
</comment>
<comment type="subunit">
    <text evidence="1">Component of the NDC80 complex, which consists of NDC80/HEC1, CDCA1, SPBC24 and SPBC25. The NDC80 complex is formed by two subcomplexes composed of NDC80/HEC1-CDCA1 and SPBC24-SPBC25. Each subcomplex is formed by parallel interactions through the coiled-coil domains of individual subunits. Formation of a tetrameric complex is mediated by interactions between the C-terminal regions of both subunits of the NDC80/HEC1-CDCA1 subcomplex and the N-terminal regions of both subunits of the SPBC24-SPBC25 complex. The tetrameric NDC80 complex has an elongated rod-like structure with globular domains at either end. May interact with AURKB/Aurora-B (By similarity).</text>
</comment>
<comment type="subcellular location">
    <subcellularLocation>
        <location evidence="1">Nucleus</location>
    </subcellularLocation>
    <subcellularLocation>
        <location evidence="1">Chromosome</location>
        <location evidence="1">Centromere</location>
        <location evidence="1">Kinetochore</location>
    </subcellularLocation>
    <text evidence="1">Localizes to kinetochores from late prophase to anaphase. Localizes specifically to the outer plate of the kinetochore (By similarity).</text>
</comment>
<comment type="PTM">
    <text evidence="1">Can be phosphorylated by AURKA and AURKB.</text>
</comment>
<comment type="similarity">
    <text evidence="4">Belongs to the NUF2 family.</text>
</comment>
<evidence type="ECO:0000250" key="1"/>
<evidence type="ECO:0000250" key="2">
    <source>
        <dbReference type="UniProtKB" id="Q9BZD4"/>
    </source>
</evidence>
<evidence type="ECO:0000255" key="3"/>
<evidence type="ECO:0000305" key="4"/>
<protein>
    <recommendedName>
        <fullName>Kinetochore protein Nuf2</fullName>
    </recommendedName>
    <alternativeName>
        <fullName>Cell division cycle-associated protein 1</fullName>
    </alternativeName>
</protein>